<evidence type="ECO:0000255" key="1">
    <source>
        <dbReference type="HAMAP-Rule" id="MF_00283"/>
    </source>
</evidence>
<accession>Q7NYC1</accession>
<keyword id="KW-0030">Aminoacyl-tRNA synthetase</keyword>
<keyword id="KW-0067">ATP-binding</keyword>
<keyword id="KW-0963">Cytoplasm</keyword>
<keyword id="KW-0436">Ligase</keyword>
<keyword id="KW-0460">Magnesium</keyword>
<keyword id="KW-0479">Metal-binding</keyword>
<keyword id="KW-0547">Nucleotide-binding</keyword>
<keyword id="KW-0648">Protein biosynthesis</keyword>
<keyword id="KW-1185">Reference proteome</keyword>
<keyword id="KW-0694">RNA-binding</keyword>
<keyword id="KW-0820">tRNA-binding</keyword>
<proteinExistence type="inferred from homology"/>
<gene>
    <name evidence="1" type="primary">pheT</name>
    <name type="ordered locus">CV_1353</name>
</gene>
<sequence>MQFSEQWLRSWVNPALNTEQLSDLLTMAGLEVEETVAAAPAFSGVVIAEVKECVKHENADRLRVTKVDAGTGELIQIVCGAPNVAVGVRVPCALPGAVLPGEFKIKPTKMRGVESNGMLCSGKELGVPEDVDGLMLLPADAPVGQSIRDYLGLDDQLFTLKITPNRADSLSIRGIAREVAALTGAELKPVAIEPVAPSIDDVRPVKIESRQACGRYLGRVVKGVNAAAPTPAWMRRRLERSGLRSISAIVDITNYILLEQGQPMHAFDLAKIDGGITVRQARAGESLLCLNEKTVELQPKHLVIADDAKPLAMGGIMGGEHSGVTVASHDIFLESAFFAPEAIAGKARELGFGSDSSYRYERGVDFALQRDAIERATRLVLEICGGQAGPVVEEVAELPKRQAVQLRAARVAKVLGVAMSAERIGDILSRLSLSYTLADEVFTVQAPSFRFDIEIEEDLIEEVARVYGYNNIPADAPRSGMRMLAQPEDKRPVDQLRHLLAGRDYQEVVSYAFVDERWERDFAGNDNPIRLQNPIASQMSVMRSTLIGGLVDVLAGNINRKQPRVRLFEVARVFLRGGNGFDQPEKVAGLVWGPRLAEQWAAKSERVDFFDVKADVEALLHPIKAEYRKAAHPAFHPGRCAEVRVDGKAVGVIGELHPQWVQAYGLINAPVLFELDLAAAIARGRIKAQPVSKFQPVRRDLALLVDEAVTVAQLLSAFAAKRAEIVADIALFDVYRGKGVAEGKKSLAFSVLMQDNSRTLTDEDVEPAMQALLEAASELGAQLRV</sequence>
<reference key="1">
    <citation type="journal article" date="2003" name="Proc. Natl. Acad. Sci. U.S.A.">
        <title>The complete genome sequence of Chromobacterium violaceum reveals remarkable and exploitable bacterial adaptability.</title>
        <authorList>
            <person name="Vasconcelos A.T.R."/>
            <person name="de Almeida D.F."/>
            <person name="Hungria M."/>
            <person name="Guimaraes C.T."/>
            <person name="Antonio R.V."/>
            <person name="Almeida F.C."/>
            <person name="de Almeida L.G.P."/>
            <person name="de Almeida R."/>
            <person name="Alves-Gomes J.A."/>
            <person name="Andrade E.M."/>
            <person name="Araripe J."/>
            <person name="de Araujo M.F.F."/>
            <person name="Astolfi-Filho S."/>
            <person name="Azevedo V."/>
            <person name="Baptista A.J."/>
            <person name="Bataus L.A.M."/>
            <person name="Batista J.S."/>
            <person name="Belo A."/>
            <person name="van den Berg C."/>
            <person name="Bogo M."/>
            <person name="Bonatto S."/>
            <person name="Bordignon J."/>
            <person name="Brigido M.M."/>
            <person name="Brito C.A."/>
            <person name="Brocchi M."/>
            <person name="Burity H.A."/>
            <person name="Camargo A.A."/>
            <person name="Cardoso D.D.P."/>
            <person name="Carneiro N.P."/>
            <person name="Carraro D.M."/>
            <person name="Carvalho C.M.B."/>
            <person name="Cascardo J.C.M."/>
            <person name="Cavada B.S."/>
            <person name="Chueire L.M.O."/>
            <person name="Creczynski-Pasa T.B."/>
            <person name="Cunha-Junior N.C."/>
            <person name="Fagundes N."/>
            <person name="Falcao C.L."/>
            <person name="Fantinatti F."/>
            <person name="Farias I.P."/>
            <person name="Felipe M.S.S."/>
            <person name="Ferrari L.P."/>
            <person name="Ferro J.A."/>
            <person name="Ferro M.I.T."/>
            <person name="Franco G.R."/>
            <person name="Freitas N.S.A."/>
            <person name="Furlan L.R."/>
            <person name="Gazzinelli R.T."/>
            <person name="Gomes E.A."/>
            <person name="Goncalves P.R."/>
            <person name="Grangeiro T.B."/>
            <person name="Grattapaglia D."/>
            <person name="Grisard E.C."/>
            <person name="Hanna E.S."/>
            <person name="Jardim S.N."/>
            <person name="Laurino J."/>
            <person name="Leoi L.C.T."/>
            <person name="Lima L.F.A."/>
            <person name="Loureiro M.F."/>
            <person name="Lyra M.C.C.P."/>
            <person name="Madeira H.M.F."/>
            <person name="Manfio G.P."/>
            <person name="Maranhao A.Q."/>
            <person name="Martins W.S."/>
            <person name="di Mauro S.M.Z."/>
            <person name="de Medeiros S.R.B."/>
            <person name="Meissner R.V."/>
            <person name="Moreira M.A.M."/>
            <person name="Nascimento F.F."/>
            <person name="Nicolas M.F."/>
            <person name="Oliveira J.G."/>
            <person name="Oliveira S.C."/>
            <person name="Paixao R.F.C."/>
            <person name="Parente J.A."/>
            <person name="Pedrosa F.O."/>
            <person name="Pena S.D.J."/>
            <person name="Pereira J.O."/>
            <person name="Pereira M."/>
            <person name="Pinto L.S.R.C."/>
            <person name="Pinto L.S."/>
            <person name="Porto J.I.R."/>
            <person name="Potrich D.P."/>
            <person name="Ramalho-Neto C.E."/>
            <person name="Reis A.M.M."/>
            <person name="Rigo L.U."/>
            <person name="Rondinelli E."/>
            <person name="Santos E.B.P."/>
            <person name="Santos F.R."/>
            <person name="Schneider M.P.C."/>
            <person name="Seuanez H.N."/>
            <person name="Silva A.M.R."/>
            <person name="da Silva A.L.C."/>
            <person name="Silva D.W."/>
            <person name="Silva R."/>
            <person name="Simoes I.C."/>
            <person name="Simon D."/>
            <person name="Soares C.M.A."/>
            <person name="Soares R.B.A."/>
            <person name="Souza E.M."/>
            <person name="Souza K.R.L."/>
            <person name="Souza R.C."/>
            <person name="Steffens M.B.R."/>
            <person name="Steindel M."/>
            <person name="Teixeira S.R."/>
            <person name="Urmenyi T."/>
            <person name="Vettore A."/>
            <person name="Wassem R."/>
            <person name="Zaha A."/>
            <person name="Simpson A.J.G."/>
        </authorList>
    </citation>
    <scope>NUCLEOTIDE SEQUENCE [LARGE SCALE GENOMIC DNA]</scope>
    <source>
        <strain>ATCC 12472 / DSM 30191 / JCM 1249 / CCUG 213 / NBRC 12614 / NCIMB 9131 / NCTC 9757 / MK</strain>
    </source>
</reference>
<protein>
    <recommendedName>
        <fullName evidence="1">Phenylalanine--tRNA ligase beta subunit</fullName>
        <ecNumber evidence="1">6.1.1.20</ecNumber>
    </recommendedName>
    <alternativeName>
        <fullName evidence="1">Phenylalanyl-tRNA synthetase beta subunit</fullName>
        <shortName evidence="1">PheRS</shortName>
    </alternativeName>
</protein>
<name>SYFB_CHRVO</name>
<organism>
    <name type="scientific">Chromobacterium violaceum (strain ATCC 12472 / DSM 30191 / JCM 1249 / CCUG 213 / NBRC 12614 / NCIMB 9131 / NCTC 9757 / MK)</name>
    <dbReference type="NCBI Taxonomy" id="243365"/>
    <lineage>
        <taxon>Bacteria</taxon>
        <taxon>Pseudomonadati</taxon>
        <taxon>Pseudomonadota</taxon>
        <taxon>Betaproteobacteria</taxon>
        <taxon>Neisseriales</taxon>
        <taxon>Chromobacteriaceae</taxon>
        <taxon>Chromobacterium</taxon>
    </lineage>
</organism>
<comment type="catalytic activity">
    <reaction evidence="1">
        <text>tRNA(Phe) + L-phenylalanine + ATP = L-phenylalanyl-tRNA(Phe) + AMP + diphosphate + H(+)</text>
        <dbReference type="Rhea" id="RHEA:19413"/>
        <dbReference type="Rhea" id="RHEA-COMP:9668"/>
        <dbReference type="Rhea" id="RHEA-COMP:9699"/>
        <dbReference type="ChEBI" id="CHEBI:15378"/>
        <dbReference type="ChEBI" id="CHEBI:30616"/>
        <dbReference type="ChEBI" id="CHEBI:33019"/>
        <dbReference type="ChEBI" id="CHEBI:58095"/>
        <dbReference type="ChEBI" id="CHEBI:78442"/>
        <dbReference type="ChEBI" id="CHEBI:78531"/>
        <dbReference type="ChEBI" id="CHEBI:456215"/>
        <dbReference type="EC" id="6.1.1.20"/>
    </reaction>
</comment>
<comment type="cofactor">
    <cofactor evidence="1">
        <name>Mg(2+)</name>
        <dbReference type="ChEBI" id="CHEBI:18420"/>
    </cofactor>
    <text evidence="1">Binds 2 magnesium ions per tetramer.</text>
</comment>
<comment type="subunit">
    <text evidence="1">Tetramer of two alpha and two beta subunits.</text>
</comment>
<comment type="subcellular location">
    <subcellularLocation>
        <location evidence="1">Cytoplasm</location>
    </subcellularLocation>
</comment>
<comment type="similarity">
    <text evidence="1">Belongs to the phenylalanyl-tRNA synthetase beta subunit family. Type 1 subfamily.</text>
</comment>
<feature type="chain" id="PRO_0000126869" description="Phenylalanine--tRNA ligase beta subunit">
    <location>
        <begin position="1"/>
        <end position="785"/>
    </location>
</feature>
<feature type="domain" description="tRNA-binding" evidence="1">
    <location>
        <begin position="39"/>
        <end position="148"/>
    </location>
</feature>
<feature type="domain" description="B5" evidence="1">
    <location>
        <begin position="399"/>
        <end position="474"/>
    </location>
</feature>
<feature type="domain" description="FDX-ACB" evidence="1">
    <location>
        <begin position="692"/>
        <end position="784"/>
    </location>
</feature>
<feature type="binding site" evidence="1">
    <location>
        <position position="452"/>
    </location>
    <ligand>
        <name>Mg(2+)</name>
        <dbReference type="ChEBI" id="CHEBI:18420"/>
        <note>shared with alpha subunit</note>
    </ligand>
</feature>
<feature type="binding site" evidence="1">
    <location>
        <position position="458"/>
    </location>
    <ligand>
        <name>Mg(2+)</name>
        <dbReference type="ChEBI" id="CHEBI:18420"/>
        <note>shared with alpha subunit</note>
    </ligand>
</feature>
<feature type="binding site" evidence="1">
    <location>
        <position position="461"/>
    </location>
    <ligand>
        <name>Mg(2+)</name>
        <dbReference type="ChEBI" id="CHEBI:18420"/>
        <note>shared with alpha subunit</note>
    </ligand>
</feature>
<feature type="binding site" evidence="1">
    <location>
        <position position="462"/>
    </location>
    <ligand>
        <name>Mg(2+)</name>
        <dbReference type="ChEBI" id="CHEBI:18420"/>
        <note>shared with alpha subunit</note>
    </ligand>
</feature>
<dbReference type="EC" id="6.1.1.20" evidence="1"/>
<dbReference type="EMBL" id="AE016825">
    <property type="protein sequence ID" value="AAQ59028.1"/>
    <property type="molecule type" value="Genomic_DNA"/>
</dbReference>
<dbReference type="RefSeq" id="WP_011134907.1">
    <property type="nucleotide sequence ID" value="NC_005085.1"/>
</dbReference>
<dbReference type="SMR" id="Q7NYC1"/>
<dbReference type="STRING" id="243365.CV_1353"/>
<dbReference type="KEGG" id="cvi:CV_1353"/>
<dbReference type="eggNOG" id="COG0072">
    <property type="taxonomic scope" value="Bacteria"/>
</dbReference>
<dbReference type="eggNOG" id="COG0073">
    <property type="taxonomic scope" value="Bacteria"/>
</dbReference>
<dbReference type="HOGENOM" id="CLU_016891_0_0_4"/>
<dbReference type="OrthoDB" id="9805455at2"/>
<dbReference type="Proteomes" id="UP000001424">
    <property type="component" value="Chromosome"/>
</dbReference>
<dbReference type="GO" id="GO:0009328">
    <property type="term" value="C:phenylalanine-tRNA ligase complex"/>
    <property type="evidence" value="ECO:0007669"/>
    <property type="project" value="TreeGrafter"/>
</dbReference>
<dbReference type="GO" id="GO:0005524">
    <property type="term" value="F:ATP binding"/>
    <property type="evidence" value="ECO:0007669"/>
    <property type="project" value="UniProtKB-UniRule"/>
</dbReference>
<dbReference type="GO" id="GO:0000287">
    <property type="term" value="F:magnesium ion binding"/>
    <property type="evidence" value="ECO:0007669"/>
    <property type="project" value="UniProtKB-UniRule"/>
</dbReference>
<dbReference type="GO" id="GO:0004826">
    <property type="term" value="F:phenylalanine-tRNA ligase activity"/>
    <property type="evidence" value="ECO:0007669"/>
    <property type="project" value="UniProtKB-UniRule"/>
</dbReference>
<dbReference type="GO" id="GO:0000049">
    <property type="term" value="F:tRNA binding"/>
    <property type="evidence" value="ECO:0007669"/>
    <property type="project" value="UniProtKB-KW"/>
</dbReference>
<dbReference type="GO" id="GO:0006432">
    <property type="term" value="P:phenylalanyl-tRNA aminoacylation"/>
    <property type="evidence" value="ECO:0007669"/>
    <property type="project" value="UniProtKB-UniRule"/>
</dbReference>
<dbReference type="CDD" id="cd00769">
    <property type="entry name" value="PheRS_beta_core"/>
    <property type="match status" value="1"/>
</dbReference>
<dbReference type="CDD" id="cd02796">
    <property type="entry name" value="tRNA_bind_bactPheRS"/>
    <property type="match status" value="1"/>
</dbReference>
<dbReference type="FunFam" id="2.40.50.140:FF:000045">
    <property type="entry name" value="Phenylalanine--tRNA ligase beta subunit"/>
    <property type="match status" value="1"/>
</dbReference>
<dbReference type="FunFam" id="3.30.56.10:FF:000002">
    <property type="entry name" value="Phenylalanine--tRNA ligase beta subunit"/>
    <property type="match status" value="1"/>
</dbReference>
<dbReference type="FunFam" id="3.30.70.380:FF:000001">
    <property type="entry name" value="Phenylalanine--tRNA ligase beta subunit"/>
    <property type="match status" value="1"/>
</dbReference>
<dbReference type="FunFam" id="3.30.930.10:FF:000022">
    <property type="entry name" value="Phenylalanine--tRNA ligase beta subunit"/>
    <property type="match status" value="1"/>
</dbReference>
<dbReference type="FunFam" id="3.50.40.10:FF:000001">
    <property type="entry name" value="Phenylalanine--tRNA ligase beta subunit"/>
    <property type="match status" value="1"/>
</dbReference>
<dbReference type="Gene3D" id="3.30.56.10">
    <property type="match status" value="2"/>
</dbReference>
<dbReference type="Gene3D" id="3.30.930.10">
    <property type="entry name" value="Bira Bifunctional Protein, Domain 2"/>
    <property type="match status" value="1"/>
</dbReference>
<dbReference type="Gene3D" id="3.30.70.380">
    <property type="entry name" value="Ferrodoxin-fold anticodon-binding domain"/>
    <property type="match status" value="1"/>
</dbReference>
<dbReference type="Gene3D" id="2.40.50.140">
    <property type="entry name" value="Nucleic acid-binding proteins"/>
    <property type="match status" value="1"/>
</dbReference>
<dbReference type="Gene3D" id="3.50.40.10">
    <property type="entry name" value="Phenylalanyl-trna Synthetase, Chain B, domain 3"/>
    <property type="match status" value="1"/>
</dbReference>
<dbReference type="HAMAP" id="MF_00283">
    <property type="entry name" value="Phe_tRNA_synth_beta1"/>
    <property type="match status" value="1"/>
</dbReference>
<dbReference type="InterPro" id="IPR045864">
    <property type="entry name" value="aa-tRNA-synth_II/BPL/LPL"/>
</dbReference>
<dbReference type="InterPro" id="IPR005146">
    <property type="entry name" value="B3/B4_tRNA-bd"/>
</dbReference>
<dbReference type="InterPro" id="IPR009061">
    <property type="entry name" value="DNA-bd_dom_put_sf"/>
</dbReference>
<dbReference type="InterPro" id="IPR005121">
    <property type="entry name" value="Fdx_antiC-bd"/>
</dbReference>
<dbReference type="InterPro" id="IPR036690">
    <property type="entry name" value="Fdx_antiC-bd_sf"/>
</dbReference>
<dbReference type="InterPro" id="IPR012340">
    <property type="entry name" value="NA-bd_OB-fold"/>
</dbReference>
<dbReference type="InterPro" id="IPR045060">
    <property type="entry name" value="Phe-tRNA-ligase_IIc_bsu"/>
</dbReference>
<dbReference type="InterPro" id="IPR004532">
    <property type="entry name" value="Phe-tRNA-ligase_IIc_bsu_bact"/>
</dbReference>
<dbReference type="InterPro" id="IPR020825">
    <property type="entry name" value="Phe-tRNA_synthase-like_B3/B4"/>
</dbReference>
<dbReference type="InterPro" id="IPR041616">
    <property type="entry name" value="PheRS_beta_core"/>
</dbReference>
<dbReference type="InterPro" id="IPR002547">
    <property type="entry name" value="tRNA-bd_dom"/>
</dbReference>
<dbReference type="InterPro" id="IPR033714">
    <property type="entry name" value="tRNA_bind_bactPheRS"/>
</dbReference>
<dbReference type="InterPro" id="IPR005147">
    <property type="entry name" value="tRNA_synthase_B5-dom"/>
</dbReference>
<dbReference type="NCBIfam" id="TIGR00472">
    <property type="entry name" value="pheT_bact"/>
    <property type="match status" value="1"/>
</dbReference>
<dbReference type="NCBIfam" id="NF045760">
    <property type="entry name" value="YtpR"/>
    <property type="match status" value="1"/>
</dbReference>
<dbReference type="PANTHER" id="PTHR10947:SF0">
    <property type="entry name" value="PHENYLALANINE--TRNA LIGASE BETA SUBUNIT"/>
    <property type="match status" value="1"/>
</dbReference>
<dbReference type="PANTHER" id="PTHR10947">
    <property type="entry name" value="PHENYLALANYL-TRNA SYNTHETASE BETA CHAIN AND LEUCINE-RICH REPEAT-CONTAINING PROTEIN 47"/>
    <property type="match status" value="1"/>
</dbReference>
<dbReference type="Pfam" id="PF03483">
    <property type="entry name" value="B3_4"/>
    <property type="match status" value="1"/>
</dbReference>
<dbReference type="Pfam" id="PF03484">
    <property type="entry name" value="B5"/>
    <property type="match status" value="1"/>
</dbReference>
<dbReference type="Pfam" id="PF03147">
    <property type="entry name" value="FDX-ACB"/>
    <property type="match status" value="1"/>
</dbReference>
<dbReference type="Pfam" id="PF01588">
    <property type="entry name" value="tRNA_bind"/>
    <property type="match status" value="1"/>
</dbReference>
<dbReference type="Pfam" id="PF17759">
    <property type="entry name" value="tRNA_synthFbeta"/>
    <property type="match status" value="1"/>
</dbReference>
<dbReference type="SMART" id="SM00873">
    <property type="entry name" value="B3_4"/>
    <property type="match status" value="1"/>
</dbReference>
<dbReference type="SMART" id="SM00874">
    <property type="entry name" value="B5"/>
    <property type="match status" value="1"/>
</dbReference>
<dbReference type="SMART" id="SM00896">
    <property type="entry name" value="FDX-ACB"/>
    <property type="match status" value="1"/>
</dbReference>
<dbReference type="SUPFAM" id="SSF54991">
    <property type="entry name" value="Anticodon-binding domain of PheRS"/>
    <property type="match status" value="1"/>
</dbReference>
<dbReference type="SUPFAM" id="SSF55681">
    <property type="entry name" value="Class II aaRS and biotin synthetases"/>
    <property type="match status" value="1"/>
</dbReference>
<dbReference type="SUPFAM" id="SSF50249">
    <property type="entry name" value="Nucleic acid-binding proteins"/>
    <property type="match status" value="1"/>
</dbReference>
<dbReference type="SUPFAM" id="SSF56037">
    <property type="entry name" value="PheT/TilS domain"/>
    <property type="match status" value="1"/>
</dbReference>
<dbReference type="SUPFAM" id="SSF46955">
    <property type="entry name" value="Putative DNA-binding domain"/>
    <property type="match status" value="1"/>
</dbReference>
<dbReference type="PROSITE" id="PS51483">
    <property type="entry name" value="B5"/>
    <property type="match status" value="1"/>
</dbReference>
<dbReference type="PROSITE" id="PS51447">
    <property type="entry name" value="FDX_ACB"/>
    <property type="match status" value="1"/>
</dbReference>
<dbReference type="PROSITE" id="PS50886">
    <property type="entry name" value="TRBD"/>
    <property type="match status" value="1"/>
</dbReference>